<sequence length="338" mass="37758">MLNEREKILLKTLVERYIHEGQPVGSRSLAKFSGLDLSPATIRNVMTDLEEMGYVSSPHTSAGRMPTTLGYRFFVDTLLVVKSLDNEQITLLENQLHPNNPTHLMNVTSRLLSELTRFVGVVVTPKRMGGAVFRHIEFVALTEKRILLILVTPEGDVQNRIILTETAYSQSDLIEAGNFLNQHYAGCTLEEIRSGLQRELTQLRRDMTGLMNAAIEIGNDALQESSEAVVIAGEHRLFDVRDLSDNLSSLKSLFEMFERKSKLLQLMELSRQAHGVKIFIGGESDETMLEEVSVVTAPYEMEGKIVGTVGVIGPRRMAYERIIPIVDITAKLLSSNLS</sequence>
<keyword id="KW-1185">Reference proteome</keyword>
<keyword id="KW-0678">Repressor</keyword>
<keyword id="KW-0346">Stress response</keyword>
<keyword id="KW-0804">Transcription</keyword>
<keyword id="KW-0805">Transcription regulation</keyword>
<organism>
    <name type="scientific">Nitrosomonas europaea (strain ATCC 19718 / CIP 103999 / KCTC 2705 / NBRC 14298)</name>
    <dbReference type="NCBI Taxonomy" id="228410"/>
    <lineage>
        <taxon>Bacteria</taxon>
        <taxon>Pseudomonadati</taxon>
        <taxon>Pseudomonadota</taxon>
        <taxon>Betaproteobacteria</taxon>
        <taxon>Nitrosomonadales</taxon>
        <taxon>Nitrosomonadaceae</taxon>
        <taxon>Nitrosomonas</taxon>
    </lineage>
</organism>
<protein>
    <recommendedName>
        <fullName evidence="1">Heat-inducible transcription repressor HrcA</fullName>
    </recommendedName>
</protein>
<gene>
    <name evidence="1" type="primary">hrcA</name>
    <name type="ordered locus">NE1477</name>
</gene>
<dbReference type="EMBL" id="AL954747">
    <property type="protein sequence ID" value="CAD85388.1"/>
    <property type="molecule type" value="Genomic_DNA"/>
</dbReference>
<dbReference type="RefSeq" id="WP_011112045.1">
    <property type="nucleotide sequence ID" value="NC_004757.1"/>
</dbReference>
<dbReference type="SMR" id="Q82UK7"/>
<dbReference type="STRING" id="228410.NE1477"/>
<dbReference type="DNASU" id="1082428"/>
<dbReference type="GeneID" id="87104651"/>
<dbReference type="KEGG" id="neu:NE1477"/>
<dbReference type="eggNOG" id="COG1420">
    <property type="taxonomic scope" value="Bacteria"/>
</dbReference>
<dbReference type="HOGENOM" id="CLU_050019_0_0_4"/>
<dbReference type="OrthoDB" id="9783139at2"/>
<dbReference type="PhylomeDB" id="Q82UK7"/>
<dbReference type="Proteomes" id="UP000001416">
    <property type="component" value="Chromosome"/>
</dbReference>
<dbReference type="GO" id="GO:0003677">
    <property type="term" value="F:DNA binding"/>
    <property type="evidence" value="ECO:0007669"/>
    <property type="project" value="InterPro"/>
</dbReference>
<dbReference type="GO" id="GO:0045892">
    <property type="term" value="P:negative regulation of DNA-templated transcription"/>
    <property type="evidence" value="ECO:0007669"/>
    <property type="project" value="UniProtKB-UniRule"/>
</dbReference>
<dbReference type="Gene3D" id="3.30.450.40">
    <property type="match status" value="1"/>
</dbReference>
<dbReference type="Gene3D" id="3.30.390.60">
    <property type="entry name" value="Heat-inducible transcription repressor hrca homolog, domain 3"/>
    <property type="match status" value="1"/>
</dbReference>
<dbReference type="Gene3D" id="1.10.10.10">
    <property type="entry name" value="Winged helix-like DNA-binding domain superfamily/Winged helix DNA-binding domain"/>
    <property type="match status" value="1"/>
</dbReference>
<dbReference type="HAMAP" id="MF_00081">
    <property type="entry name" value="HrcA"/>
    <property type="match status" value="1"/>
</dbReference>
<dbReference type="InterPro" id="IPR029016">
    <property type="entry name" value="GAF-like_dom_sf"/>
</dbReference>
<dbReference type="InterPro" id="IPR002571">
    <property type="entry name" value="HrcA"/>
</dbReference>
<dbReference type="InterPro" id="IPR021153">
    <property type="entry name" value="HrcA_C"/>
</dbReference>
<dbReference type="InterPro" id="IPR036388">
    <property type="entry name" value="WH-like_DNA-bd_sf"/>
</dbReference>
<dbReference type="InterPro" id="IPR036390">
    <property type="entry name" value="WH_DNA-bd_sf"/>
</dbReference>
<dbReference type="InterPro" id="IPR005104">
    <property type="entry name" value="WHTH_HrcA_DNA-bd"/>
</dbReference>
<dbReference type="InterPro" id="IPR023120">
    <property type="entry name" value="WHTH_transcript_rep_HrcA_IDD"/>
</dbReference>
<dbReference type="NCBIfam" id="TIGR00331">
    <property type="entry name" value="hrcA"/>
    <property type="match status" value="1"/>
</dbReference>
<dbReference type="PANTHER" id="PTHR34824">
    <property type="entry name" value="HEAT-INDUCIBLE TRANSCRIPTION REPRESSOR HRCA"/>
    <property type="match status" value="1"/>
</dbReference>
<dbReference type="PANTHER" id="PTHR34824:SF1">
    <property type="entry name" value="HEAT-INDUCIBLE TRANSCRIPTION REPRESSOR HRCA"/>
    <property type="match status" value="1"/>
</dbReference>
<dbReference type="Pfam" id="PF01628">
    <property type="entry name" value="HrcA"/>
    <property type="match status" value="1"/>
</dbReference>
<dbReference type="Pfam" id="PF03444">
    <property type="entry name" value="HrcA_DNA-bdg"/>
    <property type="match status" value="1"/>
</dbReference>
<dbReference type="PIRSF" id="PIRSF005485">
    <property type="entry name" value="HrcA"/>
    <property type="match status" value="1"/>
</dbReference>
<dbReference type="SUPFAM" id="SSF55781">
    <property type="entry name" value="GAF domain-like"/>
    <property type="match status" value="1"/>
</dbReference>
<dbReference type="SUPFAM" id="SSF46785">
    <property type="entry name" value="Winged helix' DNA-binding domain"/>
    <property type="match status" value="1"/>
</dbReference>
<comment type="function">
    <text evidence="1">Negative regulator of class I heat shock genes (grpE-dnaK-dnaJ and groELS operons). Prevents heat-shock induction of these operons.</text>
</comment>
<comment type="similarity">
    <text evidence="1">Belongs to the HrcA family.</text>
</comment>
<reference key="1">
    <citation type="journal article" date="2003" name="J. Bacteriol.">
        <title>Complete genome sequence of the ammonia-oxidizing bacterium and obligate chemolithoautotroph Nitrosomonas europaea.</title>
        <authorList>
            <person name="Chain P."/>
            <person name="Lamerdin J.E."/>
            <person name="Larimer F.W."/>
            <person name="Regala W."/>
            <person name="Lao V."/>
            <person name="Land M.L."/>
            <person name="Hauser L."/>
            <person name="Hooper A.B."/>
            <person name="Klotz M.G."/>
            <person name="Norton J."/>
            <person name="Sayavedra-Soto L.A."/>
            <person name="Arciero D.M."/>
            <person name="Hommes N.G."/>
            <person name="Whittaker M.M."/>
            <person name="Arp D.J."/>
        </authorList>
    </citation>
    <scope>NUCLEOTIDE SEQUENCE [LARGE SCALE GENOMIC DNA]</scope>
    <source>
        <strain>ATCC 19718 / CIP 103999 / KCTC 2705 / NBRC 14298</strain>
    </source>
</reference>
<accession>Q82UK7</accession>
<evidence type="ECO:0000255" key="1">
    <source>
        <dbReference type="HAMAP-Rule" id="MF_00081"/>
    </source>
</evidence>
<name>HRCA_NITEU</name>
<proteinExistence type="inferred from homology"/>
<feature type="chain" id="PRO_0000182513" description="Heat-inducible transcription repressor HrcA">
    <location>
        <begin position="1"/>
        <end position="338"/>
    </location>
</feature>